<feature type="chain" id="PRO_0000412096" description="6-carboxyhexanoate--CoA ligase">
    <location>
        <begin position="1"/>
        <end position="233"/>
    </location>
</feature>
<sequence length="233" mass="26564">MYSIKMRASKNGKHISGAERIVNKDEIEDVARELIKRALTHENGTPDFINIKIEEIKEDIEYIDHLPIKTIHCKNKEEAREKAREILRNEGIPDKVIDYAYEIIDKGGMRGAAILNLKGERLEPDKERGVRVKNIDTTKELKEKILKEKLGTERTVDAIAIASKVIHLGVIAELCTSDNKSYTTGYVATKRGYFRITNLKKEGESGGRVFFVKNDVNIEDLIDKLENKPFIIK</sequence>
<keyword id="KW-0067">ATP-binding</keyword>
<keyword id="KW-0093">Biotin biosynthesis</keyword>
<keyword id="KW-0436">Ligase</keyword>
<keyword id="KW-0460">Magnesium</keyword>
<keyword id="KW-0547">Nucleotide-binding</keyword>
<organism>
    <name type="scientific">Methanocaldococcus sp. (strain FS406-22)</name>
    <dbReference type="NCBI Taxonomy" id="644281"/>
    <lineage>
        <taxon>Archaea</taxon>
        <taxon>Methanobacteriati</taxon>
        <taxon>Methanobacteriota</taxon>
        <taxon>Methanomada group</taxon>
        <taxon>Methanococci</taxon>
        <taxon>Methanococcales</taxon>
        <taxon>Methanocaldococcaceae</taxon>
        <taxon>Methanocaldococcus</taxon>
    </lineage>
</organism>
<evidence type="ECO:0000255" key="1">
    <source>
        <dbReference type="HAMAP-Rule" id="MF_00668"/>
    </source>
</evidence>
<gene>
    <name evidence="1" type="primary">bioW</name>
    <name type="ordered locus">MFS40622_0356</name>
</gene>
<name>BIOW_METSF</name>
<proteinExistence type="inferred from homology"/>
<reference key="1">
    <citation type="submission" date="2010-02" db="EMBL/GenBank/DDBJ databases">
        <title>Complete sequence of chromosome of Methanocaldococcus sp. FS406-22.</title>
        <authorList>
            <consortium name="US DOE Joint Genome Institute"/>
            <person name="Lucas S."/>
            <person name="Copeland A."/>
            <person name="Lapidus A."/>
            <person name="Cheng J.-F."/>
            <person name="Bruce D."/>
            <person name="Goodwin L."/>
            <person name="Pitluck S."/>
            <person name="Teshima H."/>
            <person name="Detter J.C."/>
            <person name="Han C."/>
            <person name="Tapia R."/>
            <person name="Larimer F."/>
            <person name="Land M."/>
            <person name="Hauser L."/>
            <person name="Kyrpides N."/>
            <person name="Mikhailova N."/>
            <person name="Sieprawska-Lupa M."/>
            <person name="Leigh J."/>
            <person name="Whitman W.B."/>
            <person name="Woyke T."/>
        </authorList>
    </citation>
    <scope>NUCLEOTIDE SEQUENCE [LARGE SCALE GENOMIC DNA]</scope>
    <source>
        <strain>FS406-22</strain>
    </source>
</reference>
<protein>
    <recommendedName>
        <fullName evidence="1">6-carboxyhexanoate--CoA ligase</fullName>
        <ecNumber evidence="1">6.2.1.14</ecNumber>
    </recommendedName>
    <alternativeName>
        <fullName evidence="1">Pimeloyl-CoA synthase</fullName>
    </alternativeName>
</protein>
<accession>D3S7P2</accession>
<dbReference type="EC" id="6.2.1.14" evidence="1"/>
<dbReference type="EMBL" id="CP001901">
    <property type="protein sequence ID" value="ADC69052.1"/>
    <property type="molecule type" value="Genomic_DNA"/>
</dbReference>
<dbReference type="RefSeq" id="WP_012979963.1">
    <property type="nucleotide sequence ID" value="NC_013887.1"/>
</dbReference>
<dbReference type="SMR" id="D3S7P2"/>
<dbReference type="STRING" id="644281.MFS40622_0356"/>
<dbReference type="GeneID" id="8804195"/>
<dbReference type="KEGG" id="mfs:MFS40622_0356"/>
<dbReference type="eggNOG" id="arCOG05075">
    <property type="taxonomic scope" value="Archaea"/>
</dbReference>
<dbReference type="HOGENOM" id="CLU_076858_0_0_2"/>
<dbReference type="OrthoDB" id="65815at2157"/>
<dbReference type="UniPathway" id="UPA00999">
    <property type="reaction ID" value="UER00351"/>
</dbReference>
<dbReference type="Proteomes" id="UP000002189">
    <property type="component" value="Chromosome"/>
</dbReference>
<dbReference type="GO" id="GO:0042410">
    <property type="term" value="F:6-carboxyhexanoate-CoA ligase activity"/>
    <property type="evidence" value="ECO:0007669"/>
    <property type="project" value="UniProtKB-UniRule"/>
</dbReference>
<dbReference type="GO" id="GO:0005524">
    <property type="term" value="F:ATP binding"/>
    <property type="evidence" value="ECO:0007669"/>
    <property type="project" value="UniProtKB-KW"/>
</dbReference>
<dbReference type="GO" id="GO:0000287">
    <property type="term" value="F:magnesium ion binding"/>
    <property type="evidence" value="ECO:0007669"/>
    <property type="project" value="UniProtKB-UniRule"/>
</dbReference>
<dbReference type="GO" id="GO:0009102">
    <property type="term" value="P:biotin biosynthetic process"/>
    <property type="evidence" value="ECO:0007669"/>
    <property type="project" value="UniProtKB-UniRule"/>
</dbReference>
<dbReference type="HAMAP" id="MF_00668">
    <property type="entry name" value="BioW"/>
    <property type="match status" value="1"/>
</dbReference>
<dbReference type="InterPro" id="IPR005499">
    <property type="entry name" value="BioW"/>
</dbReference>
<dbReference type="NCBIfam" id="TIGR01204">
    <property type="entry name" value="bioW"/>
    <property type="match status" value="1"/>
</dbReference>
<dbReference type="NCBIfam" id="NF002360">
    <property type="entry name" value="PRK01322.1"/>
    <property type="match status" value="1"/>
</dbReference>
<dbReference type="Pfam" id="PF03744">
    <property type="entry name" value="BioW"/>
    <property type="match status" value="1"/>
</dbReference>
<comment type="function">
    <text evidence="1">Catalyzes the transformation of pimelate into pimeloyl-CoA with concomitant hydrolysis of ATP to AMP.</text>
</comment>
<comment type="catalytic activity">
    <reaction evidence="1">
        <text>heptanedioate + ATP + CoA = 6-carboxyhexanoyl-CoA + AMP + diphosphate</text>
        <dbReference type="Rhea" id="RHEA:14781"/>
        <dbReference type="ChEBI" id="CHEBI:30616"/>
        <dbReference type="ChEBI" id="CHEBI:33019"/>
        <dbReference type="ChEBI" id="CHEBI:36165"/>
        <dbReference type="ChEBI" id="CHEBI:57287"/>
        <dbReference type="ChEBI" id="CHEBI:57360"/>
        <dbReference type="ChEBI" id="CHEBI:456215"/>
        <dbReference type="EC" id="6.2.1.14"/>
    </reaction>
</comment>
<comment type="cofactor">
    <cofactor evidence="1">
        <name>Mg(2+)</name>
        <dbReference type="ChEBI" id="CHEBI:18420"/>
    </cofactor>
</comment>
<comment type="pathway">
    <text evidence="1">Metabolic intermediate metabolism; pimeloyl-CoA biosynthesis; pimeloyl-CoA from pimelate: step 1/1.</text>
</comment>
<comment type="subunit">
    <text evidence="1">Homodimer.</text>
</comment>
<comment type="similarity">
    <text evidence="1">Belongs to the BioW family.</text>
</comment>